<accession>B9W5G6</accession>
<accession>P86212</accession>
<feature type="chain" id="PRO_0000381730" description="DELTA-actitoxin-Afr1a" evidence="19">
    <location>
        <begin position="1"/>
        <end position="179"/>
    </location>
</feature>
<feature type="region of interest" description="N-terminal alpha-helix that contributes to the pore" evidence="20">
    <location>
        <begin position="1"/>
        <end position="29"/>
    </location>
</feature>
<feature type="region of interest" description="Trp-rich region, which is important for the binding to lipid membrane" evidence="2">
    <location>
        <begin position="105"/>
        <end position="120"/>
    </location>
</feature>
<feature type="short sequence motif" description="Cell attachment site, crucial for protein stability" evidence="1 3">
    <location>
        <begin position="144"/>
        <end position="146"/>
    </location>
</feature>
<feature type="binding site" description="in subunit A; in oligomeric forms only" evidence="21">
    <location>
        <position position="31"/>
    </location>
    <ligand>
        <name>an N-(acyl)-sphingosylphosphocholine</name>
        <dbReference type="ChEBI" id="CHEBI:64583"/>
        <label>1</label>
        <note>bridging lipid L1</note>
    </ligand>
</feature>
<feature type="binding site" evidence="10">
    <location>
        <position position="51"/>
    </location>
    <ligand>
        <name>N-acetyl-D-glucosamine 6-sulfate</name>
        <dbReference type="ChEBI" id="CHEBI:84775"/>
    </ligand>
</feature>
<feature type="binding site" description="in monomeric and oligomeric forms" evidence="21">
    <location>
        <position position="53"/>
    </location>
    <ligand>
        <name>an N-(acyl)-sphingosylphosphocholine</name>
        <dbReference type="ChEBI" id="CHEBI:64583"/>
        <label>2</label>
        <note>lipid L2</note>
    </ligand>
</feature>
<feature type="binding site" evidence="10">
    <location>
        <position position="53"/>
    </location>
    <ligand>
        <name>N-acetyl-D-glucosamine 6-sulfate</name>
        <dbReference type="ChEBI" id="CHEBI:84775"/>
    </ligand>
</feature>
<feature type="binding site" description="in monomeric and oligomeric forms" evidence="21">
    <location>
        <position position="54"/>
    </location>
    <ligand>
        <name>an N-(acyl)-sphingosylphosphocholine</name>
        <dbReference type="ChEBI" id="CHEBI:64583"/>
        <label>2</label>
        <note>lipid L2</note>
    </ligand>
</feature>
<feature type="binding site" description="in subunit B; in oligomeric forms only" evidence="21">
    <location>
        <position position="79"/>
    </location>
    <ligand>
        <name>an N-(acyl)-sphingosylphosphocholine</name>
        <dbReference type="ChEBI" id="CHEBI:64583"/>
        <label>1</label>
        <note>bridging lipid L1</note>
    </ligand>
</feature>
<feature type="binding site" description="in monomeric and oligomeric forms" evidence="21">
    <location>
        <position position="85"/>
    </location>
    <ligand>
        <name>an N-(acyl)-sphingosylphosphocholine</name>
        <dbReference type="ChEBI" id="CHEBI:64583"/>
        <label>2</label>
        <note>lipid L2</note>
    </ligand>
</feature>
<feature type="binding site" description="in monomeric and oligomeric forms" evidence="21">
    <location>
        <position position="108"/>
    </location>
    <ligand>
        <name>an N-(acyl)-sphingosylphosphocholine</name>
        <dbReference type="ChEBI" id="CHEBI:64583"/>
        <label>2</label>
        <note>lipid L2</note>
    </ligand>
</feature>
<feature type="binding site" description="in monomeric and oligomeric forms" evidence="21">
    <location>
        <position position="113"/>
    </location>
    <ligand>
        <name>an N-(acyl)-sphingosylphosphocholine</name>
        <dbReference type="ChEBI" id="CHEBI:64583"/>
        <label>2</label>
        <note>lipid L2</note>
    </ligand>
</feature>
<feature type="binding site" description="in monomeric and oligomeric forms" evidence="21">
    <location>
        <position position="114"/>
    </location>
    <ligand>
        <name>an N-(acyl)-sphingosylphosphocholine</name>
        <dbReference type="ChEBI" id="CHEBI:64583"/>
        <label>5</label>
        <note>lipid L5</note>
    </ligand>
</feature>
<feature type="binding site" description="in monomeric and oligomeric forms" evidence="21">
    <location>
        <position position="116"/>
    </location>
    <ligand>
        <name>an N-(acyl)-sphingosylphosphocholine</name>
        <dbReference type="ChEBI" id="CHEBI:64583"/>
        <label>3</label>
        <note>lipid L3</note>
    </ligand>
</feature>
<feature type="binding site" description="in monomeric and oligomeric forms" evidence="21">
    <location>
        <position position="133"/>
    </location>
    <ligand>
        <name>an N-(acyl)-sphingosylphosphocholine</name>
        <dbReference type="ChEBI" id="CHEBI:64583"/>
        <label>4</label>
        <note>lipid L4</note>
    </ligand>
</feature>
<feature type="binding site" description="in monomeric and oligomeric forms" evidence="21">
    <location>
        <position position="137"/>
    </location>
    <ligand>
        <name>an N-(acyl)-sphingosylphosphocholine</name>
        <dbReference type="ChEBI" id="CHEBI:64583"/>
        <label>3</label>
        <note>lipid L3</note>
    </ligand>
</feature>
<feature type="binding site" description="in monomeric and oligomeric forms" evidence="21">
    <location>
        <position position="138"/>
    </location>
    <ligand>
        <name>an N-(acyl)-sphingosylphosphocholine</name>
        <dbReference type="ChEBI" id="CHEBI:64583"/>
        <label>4</label>
        <note>lipid L4</note>
    </ligand>
</feature>
<feature type="binding site" evidence="10">
    <location>
        <position position="138"/>
    </location>
    <ligand>
        <name>N-acetyl-D-glucosamine 6-sulfate</name>
        <dbReference type="ChEBI" id="CHEBI:84775"/>
    </ligand>
</feature>
<feature type="binding site" description="in monomeric and oligomeric forms" evidence="21">
    <location>
        <position position="144"/>
    </location>
    <ligand>
        <name>an N-(acyl)-sphingosylphosphocholine</name>
        <dbReference type="ChEBI" id="CHEBI:64583"/>
        <label>5</label>
        <note>lipid L5</note>
    </ligand>
</feature>
<feature type="binding site" description="in subunit A; in oligomeric forms only" evidence="21">
    <location>
        <position position="168"/>
    </location>
    <ligand>
        <name>an N-(acyl)-sphingosylphosphocholine</name>
        <dbReference type="ChEBI" id="CHEBI:64583"/>
        <label>1</label>
        <note>bridging lipid L1</note>
    </ligand>
</feature>
<feature type="site" description="Part of the hydrophobic cavity (in subunit A) that receives Val-60 from the adjacent subunit (B); essential in hemolysis, since it is critical for pore formation in cholesterol-rich membrane cells (such as red blood cells)" evidence="20 21 22">
    <location>
        <position position="16"/>
    </location>
</feature>
<feature type="site" description="Protrudes from one subunit (B) and inserts into the hydrophobic cavity from the adjacent subunit (A)" evidence="20 21">
    <location>
        <position position="60"/>
    </location>
</feature>
<feature type="site" description="Part of the hydrophobic cavity (in subunit A) that receives Val-60 from the adjacent subunit (B)" evidence="20 21">
    <location>
        <position position="149"/>
    </location>
</feature>
<feature type="site" description="Part of the hydrophobic cavity (in subunit A) that receives Val-60 from the adjacent subunit (B)" evidence="20">
    <location>
        <position position="163"/>
    </location>
</feature>
<feature type="mutagenesis site" description="In V8C/K69C; loss of ability to form stable pores after addition of a new disulfide bond; when associated with C-69." evidence="7">
    <original>V</original>
    <variation>C</variation>
    <location>
        <position position="8"/>
    </location>
</feature>
<feature type="mutagenesis site" description="Loss of pore formation ability in cholesterol-rich membranes, but no change in pore formation on membranes with low cholesterol content." evidence="8">
    <original>F</original>
    <variation>A</variation>
    <variation>G</variation>
    <variation>P</variation>
    <location>
        <position position="16"/>
    </location>
</feature>
<feature type="mutagenesis site" description="V60E/W149A; decrease in hemolytic activity, suggesting that this mutant forms functional but structurally weak pores; when associated with A-149." evidence="7">
    <original>V</original>
    <variation>E</variation>
    <location>
        <position position="60"/>
    </location>
</feature>
<feature type="mutagenesis site" description="In V8C/K69C; loss of ability to form stable pores after addition of a new disulfide bond; when associated with C-8." evidence="7">
    <original>K</original>
    <variation>C</variation>
    <location>
        <position position="69"/>
    </location>
</feature>
<feature type="mutagenesis site" description="In W112R/W116F; loss of ability to bind membranes; when associated with F-116." evidence="7">
    <original>W</original>
    <variation>R</variation>
    <location>
        <position position="112"/>
    </location>
</feature>
<feature type="mutagenesis site" description="In W112R/W116F; loss of ability to bind membranes; when associated with R-112." evidence="7">
    <original>W</original>
    <variation>F</variation>
    <location>
        <position position="116"/>
    </location>
</feature>
<feature type="mutagenesis site" description="In V60E/W149A; decrease in hemolytic activity, suggesting that this mutant forms functional but structurally weak pores; when associated with E-60." evidence="7">
    <original>W</original>
    <variation>A</variation>
    <location>
        <position position="149"/>
    </location>
</feature>
<feature type="strand" evidence="36">
    <location>
        <begin position="8"/>
        <end position="10"/>
    </location>
</feature>
<feature type="helix" evidence="36">
    <location>
        <begin position="11"/>
        <end position="13"/>
    </location>
</feature>
<feature type="helix" evidence="36">
    <location>
        <begin position="16"/>
        <end position="25"/>
    </location>
</feature>
<feature type="strand" evidence="36">
    <location>
        <begin position="30"/>
        <end position="43"/>
    </location>
</feature>
<feature type="strand" evidence="36">
    <location>
        <begin position="45"/>
        <end position="54"/>
    </location>
</feature>
<feature type="strand" evidence="36">
    <location>
        <begin position="63"/>
        <end position="65"/>
    </location>
</feature>
<feature type="strand" evidence="36">
    <location>
        <begin position="69"/>
        <end position="76"/>
    </location>
</feature>
<feature type="strand" evidence="36">
    <location>
        <begin position="79"/>
        <end position="81"/>
    </location>
</feature>
<feature type="strand" evidence="36">
    <location>
        <begin position="86"/>
        <end position="94"/>
    </location>
</feature>
<feature type="strand" evidence="36">
    <location>
        <begin position="99"/>
        <end position="106"/>
    </location>
</feature>
<feature type="turn" evidence="36">
    <location>
        <begin position="110"/>
        <end position="112"/>
    </location>
</feature>
<feature type="strand" evidence="36">
    <location>
        <begin position="116"/>
        <end position="124"/>
    </location>
</feature>
<feature type="helix" evidence="36">
    <location>
        <begin position="130"/>
        <end position="138"/>
    </location>
</feature>
<feature type="strand" evidence="36">
    <location>
        <begin position="146"/>
        <end position="155"/>
    </location>
</feature>
<feature type="strand" evidence="36">
    <location>
        <begin position="158"/>
        <end position="164"/>
    </location>
</feature>
<feature type="strand" evidence="36">
    <location>
        <begin position="166"/>
        <end position="178"/>
    </location>
</feature>
<protein>
    <recommendedName>
        <fullName evidence="14">DELTA-actitoxin-Afr1a</fullName>
        <shortName evidence="14">DELTA-AITX-Afr1a</shortName>
    </recommendedName>
    <alternativeName>
        <fullName evidence="13 15 16">Alpha-helical pore-forming toxin</fullName>
        <shortName evidence="13 15 16">PFT</shortName>
    </alternativeName>
    <alternativeName>
        <fullName evidence="17">Cytolysin</fullName>
    </alternativeName>
    <alternativeName>
        <fullName evidence="12 13 15 17">Fragaceatoxin C</fullName>
        <shortName evidence="12 13 15 17">fraC</shortName>
    </alternativeName>
</protein>
<keyword id="KW-0002">3D-structure</keyword>
<keyword id="KW-0204">Cytolysis</keyword>
<keyword id="KW-0903">Direct protein sequencing</keyword>
<keyword id="KW-0406">Ion transport</keyword>
<keyword id="KW-0446">Lipid-binding</keyword>
<keyword id="KW-0472">Membrane</keyword>
<keyword id="KW-0166">Nematocyst</keyword>
<keyword id="KW-0964">Secreted</keyword>
<keyword id="KW-1052">Target cell membrane</keyword>
<keyword id="KW-1053">Target membrane</keyword>
<keyword id="KW-0800">Toxin</keyword>
<keyword id="KW-0812">Transmembrane</keyword>
<keyword id="KW-0813">Transport</keyword>
<sequence length="179" mass="19719">SADVAGAVIDGAGLGFDVLKTVLEALGNVKRKIAVGIDNESGKTWTAMNTYFRSGTSDIVLPHKVAHGKALLYNGQKNRGPVATGVVGVIAYSMSDGNTLAVLFSVPYDYNWYSNWWNVRVYKGQKRADQRMYEELYYHRSPFRGDNGWHSRGLGYGLKSRGFMNSSGHAILEIHVTKA</sequence>
<organism>
    <name type="scientific">Actinia fragacea</name>
    <name type="common">Strawberry anemone</name>
    <dbReference type="NCBI Taxonomy" id="396334"/>
    <lineage>
        <taxon>Eukaryota</taxon>
        <taxon>Metazoa</taxon>
        <taxon>Cnidaria</taxon>
        <taxon>Anthozoa</taxon>
        <taxon>Hexacorallia</taxon>
        <taxon>Actiniaria</taxon>
        <taxon>Actiniidae</taxon>
        <taxon>Actinia</taxon>
    </lineage>
</organism>
<dbReference type="EMBL" id="FM958450">
    <property type="protein sequence ID" value="CAX16792.1"/>
    <property type="molecule type" value="mRNA"/>
</dbReference>
<dbReference type="PDB" id="3LIM">
    <property type="method" value="X-ray"/>
    <property type="resolution" value="1.80 A"/>
    <property type="chains" value="A/B/C/D/E/F=2-179"/>
</dbReference>
<dbReference type="PDB" id="3VWI">
    <property type="method" value="X-ray"/>
    <property type="resolution" value="1.70 A"/>
    <property type="chains" value="A/B/C/D=1-179"/>
</dbReference>
<dbReference type="PDB" id="3W9P">
    <property type="method" value="X-ray"/>
    <property type="resolution" value="2.10 A"/>
    <property type="chains" value="A/B=1-179"/>
</dbReference>
<dbReference type="PDB" id="3ZWG">
    <property type="method" value="X-ray"/>
    <property type="resolution" value="3.00 A"/>
    <property type="chains" value="A/B/C/D/E/F/G/H/I/J/K/L/M/N/O=1-179"/>
</dbReference>
<dbReference type="PDB" id="3ZWJ">
    <property type="method" value="X-ray"/>
    <property type="resolution" value="2.37 A"/>
    <property type="chains" value="A/B/C/D/E/F/G/H/I=1-179"/>
</dbReference>
<dbReference type="PDB" id="4TSL">
    <property type="method" value="X-ray"/>
    <property type="resolution" value="1.60 A"/>
    <property type="chains" value="A/B=1-179"/>
</dbReference>
<dbReference type="PDB" id="4TSN">
    <property type="method" value="X-ray"/>
    <property type="resolution" value="1.57 A"/>
    <property type="chains" value="A/B/C/D=1-179"/>
</dbReference>
<dbReference type="PDB" id="4TSO">
    <property type="method" value="X-ray"/>
    <property type="resolution" value="2.30 A"/>
    <property type="chains" value="A/B=1-179"/>
</dbReference>
<dbReference type="PDB" id="4TSP">
    <property type="method" value="X-ray"/>
    <property type="resolution" value="2.15 A"/>
    <property type="chains" value="A/B=1-179"/>
</dbReference>
<dbReference type="PDB" id="4TSQ">
    <property type="method" value="X-ray"/>
    <property type="resolution" value="1.60 A"/>
    <property type="chains" value="A/B/C/D/E/F=1-179"/>
</dbReference>
<dbReference type="PDB" id="4TSY">
    <property type="method" value="X-ray"/>
    <property type="resolution" value="3.14 A"/>
    <property type="chains" value="A/B/C/D=1-179"/>
</dbReference>
<dbReference type="PDB" id="4WDC">
    <property type="method" value="X-ray"/>
    <property type="resolution" value="1.29 A"/>
    <property type="chains" value="A=3-179"/>
</dbReference>
<dbReference type="PDB" id="5BPG">
    <property type="method" value="X-ray"/>
    <property type="resolution" value="2.14 A"/>
    <property type="chains" value="A/B/C/D=1-179"/>
</dbReference>
<dbReference type="PDB" id="5GWF">
    <property type="method" value="X-ray"/>
    <property type="resolution" value="1.55 A"/>
    <property type="chains" value="A/B/C/D=3-179"/>
</dbReference>
<dbReference type="PDBsum" id="3LIM"/>
<dbReference type="PDBsum" id="3VWI"/>
<dbReference type="PDBsum" id="3W9P"/>
<dbReference type="PDBsum" id="3ZWG"/>
<dbReference type="PDBsum" id="3ZWJ"/>
<dbReference type="PDBsum" id="4TSL"/>
<dbReference type="PDBsum" id="4TSN"/>
<dbReference type="PDBsum" id="4TSO"/>
<dbReference type="PDBsum" id="4TSP"/>
<dbReference type="PDBsum" id="4TSQ"/>
<dbReference type="PDBsum" id="4TSY"/>
<dbReference type="PDBsum" id="4WDC"/>
<dbReference type="PDBsum" id="5BPG"/>
<dbReference type="PDBsum" id="5GWF"/>
<dbReference type="SMR" id="B9W5G6"/>
<dbReference type="DIP" id="DIP-59108N"/>
<dbReference type="TCDB" id="1.C.38.1.8">
    <property type="family name" value="the pore-forming equinatoxin (equinatoxin) family"/>
</dbReference>
<dbReference type="EvolutionaryTrace" id="B9W5G6"/>
<dbReference type="GO" id="GO:0005576">
    <property type="term" value="C:extracellular region"/>
    <property type="evidence" value="ECO:0007669"/>
    <property type="project" value="UniProtKB-SubCell"/>
</dbReference>
<dbReference type="GO" id="GO:0042151">
    <property type="term" value="C:nematocyst"/>
    <property type="evidence" value="ECO:0007669"/>
    <property type="project" value="UniProtKB-SubCell"/>
</dbReference>
<dbReference type="GO" id="GO:0044218">
    <property type="term" value="C:other organism cell membrane"/>
    <property type="evidence" value="ECO:0007669"/>
    <property type="project" value="UniProtKB-KW"/>
</dbReference>
<dbReference type="GO" id="GO:0046930">
    <property type="term" value="C:pore complex"/>
    <property type="evidence" value="ECO:0007669"/>
    <property type="project" value="InterPro"/>
</dbReference>
<dbReference type="GO" id="GO:0015267">
    <property type="term" value="F:channel activity"/>
    <property type="evidence" value="ECO:0007669"/>
    <property type="project" value="InterPro"/>
</dbReference>
<dbReference type="GO" id="GO:0042802">
    <property type="term" value="F:identical protein binding"/>
    <property type="evidence" value="ECO:0000353"/>
    <property type="project" value="IntAct"/>
</dbReference>
<dbReference type="GO" id="GO:0008289">
    <property type="term" value="F:lipid binding"/>
    <property type="evidence" value="ECO:0007669"/>
    <property type="project" value="UniProtKB-KW"/>
</dbReference>
<dbReference type="GO" id="GO:0090729">
    <property type="term" value="F:toxin activity"/>
    <property type="evidence" value="ECO:0007669"/>
    <property type="project" value="UniProtKB-KW"/>
</dbReference>
<dbReference type="GO" id="GO:0051715">
    <property type="term" value="P:cytolysis in another organism"/>
    <property type="evidence" value="ECO:0007669"/>
    <property type="project" value="InterPro"/>
</dbReference>
<dbReference type="GO" id="GO:0006812">
    <property type="term" value="P:monoatomic cation transport"/>
    <property type="evidence" value="ECO:0007669"/>
    <property type="project" value="InterPro"/>
</dbReference>
<dbReference type="GO" id="GO:0046931">
    <property type="term" value="P:pore complex assembly"/>
    <property type="evidence" value="ECO:0007669"/>
    <property type="project" value="InterPro"/>
</dbReference>
<dbReference type="FunFam" id="2.60.270.20:FF:000001">
    <property type="entry name" value="DELTA-actitoxin-Afr1a"/>
    <property type="match status" value="1"/>
</dbReference>
<dbReference type="Gene3D" id="2.60.270.20">
    <property type="entry name" value="Cytolysin/lectin"/>
    <property type="match status" value="1"/>
</dbReference>
<dbReference type="InterPro" id="IPR050677">
    <property type="entry name" value="Actinoporin_PFT"/>
</dbReference>
<dbReference type="InterPro" id="IPR009104">
    <property type="entry name" value="Anemon_actinoporin-like"/>
</dbReference>
<dbReference type="InterPro" id="IPR015926">
    <property type="entry name" value="Cytolysin/lectin"/>
</dbReference>
<dbReference type="PANTHER" id="PTHR40388">
    <property type="entry name" value="BRYOPORIN"/>
    <property type="match status" value="1"/>
</dbReference>
<dbReference type="PANTHER" id="PTHR40388:SF1">
    <property type="entry name" value="BRYOPORIN"/>
    <property type="match status" value="1"/>
</dbReference>
<dbReference type="Pfam" id="PF06369">
    <property type="entry name" value="Anemone_cytotox"/>
    <property type="match status" value="1"/>
</dbReference>
<dbReference type="SUPFAM" id="SSF63724">
    <property type="entry name" value="Cytolysin/lectin"/>
    <property type="match status" value="1"/>
</dbReference>
<evidence type="ECO:0000250" key="1">
    <source>
        <dbReference type="UniProtKB" id="P07845"/>
    </source>
</evidence>
<evidence type="ECO:0000250" key="2">
    <source>
        <dbReference type="UniProtKB" id="P61914"/>
    </source>
</evidence>
<evidence type="ECO:0000255" key="3"/>
<evidence type="ECO:0000269" key="4">
    <source>
    </source>
</evidence>
<evidence type="ECO:0000269" key="5">
    <source>
    </source>
</evidence>
<evidence type="ECO:0000269" key="6">
    <source>
    </source>
</evidence>
<evidence type="ECO:0000269" key="7">
    <source>
    </source>
</evidence>
<evidence type="ECO:0000269" key="8">
    <source>
    </source>
</evidence>
<evidence type="ECO:0000269" key="9">
    <source>
    </source>
</evidence>
<evidence type="ECO:0000269" key="10">
    <source>
    </source>
</evidence>
<evidence type="ECO:0000269" key="11">
    <source>
    </source>
</evidence>
<evidence type="ECO:0000303" key="12">
    <source>
    </source>
</evidence>
<evidence type="ECO:0000303" key="13">
    <source>
    </source>
</evidence>
<evidence type="ECO:0000303" key="14">
    <source>
    </source>
</evidence>
<evidence type="ECO:0000303" key="15">
    <source>
    </source>
</evidence>
<evidence type="ECO:0000303" key="16">
    <source>
    </source>
</evidence>
<evidence type="ECO:0000303" key="17">
    <source>
    </source>
</evidence>
<evidence type="ECO:0000305" key="18"/>
<evidence type="ECO:0000305" key="19">
    <source>
    </source>
</evidence>
<evidence type="ECO:0000305" key="20">
    <source>
    </source>
</evidence>
<evidence type="ECO:0000305" key="21">
    <source>
    </source>
</evidence>
<evidence type="ECO:0000305" key="22">
    <source>
    </source>
</evidence>
<evidence type="ECO:0007744" key="23">
    <source>
        <dbReference type="PDB" id="3LIM"/>
    </source>
</evidence>
<evidence type="ECO:0007744" key="24">
    <source>
        <dbReference type="PDB" id="3VWI"/>
    </source>
</evidence>
<evidence type="ECO:0007744" key="25">
    <source>
        <dbReference type="PDB" id="3W9P"/>
    </source>
</evidence>
<evidence type="ECO:0007744" key="26">
    <source>
        <dbReference type="PDB" id="3ZWG"/>
    </source>
</evidence>
<evidence type="ECO:0007744" key="27">
    <source>
        <dbReference type="PDB" id="3ZWJ"/>
    </source>
</evidence>
<evidence type="ECO:0007744" key="28">
    <source>
        <dbReference type="PDB" id="4TSL"/>
    </source>
</evidence>
<evidence type="ECO:0007744" key="29">
    <source>
        <dbReference type="PDB" id="4TSN"/>
    </source>
</evidence>
<evidence type="ECO:0007744" key="30">
    <source>
        <dbReference type="PDB" id="4TSO"/>
    </source>
</evidence>
<evidence type="ECO:0007744" key="31">
    <source>
        <dbReference type="PDB" id="4TSP"/>
    </source>
</evidence>
<evidence type="ECO:0007744" key="32">
    <source>
        <dbReference type="PDB" id="4TSQ"/>
    </source>
</evidence>
<evidence type="ECO:0007744" key="33">
    <source>
        <dbReference type="PDB" id="4TSY"/>
    </source>
</evidence>
<evidence type="ECO:0007744" key="34">
    <source>
        <dbReference type="PDB" id="4WDC"/>
    </source>
</evidence>
<evidence type="ECO:0007744" key="35">
    <source>
        <dbReference type="PDB" id="5GWF"/>
    </source>
</evidence>
<evidence type="ECO:0007829" key="36">
    <source>
        <dbReference type="PDB" id="4WDC"/>
    </source>
</evidence>
<reference key="1">
    <citation type="journal article" date="2009" name="Toxicon">
        <title>Purification, cloning and characterization of fragaceatoxin C, a novel actinoporin from the sea anemone Actinia fragacea.</title>
        <authorList>
            <person name="Bellomio A."/>
            <person name="Morante K."/>
            <person name="Barlic A."/>
            <person name="Gutierrez-Aguirre I."/>
            <person name="Viguera A.R."/>
            <person name="Gonzalez-Manas J.M."/>
        </authorList>
    </citation>
    <scope>PROTEIN SEQUENCE OF 1-15</scope>
    <scope>NUCLEOTIDE SEQUENCE [MRNA] OF 13-179</scope>
    <scope>FUNCTION</scope>
    <scope>SUBCELLULAR LOCATION</scope>
    <scope>MASS SPECTROMETRY</scope>
    <source>
        <tissue>Venom</tissue>
    </source>
</reference>
<reference key="2">
    <citation type="journal article" date="2009" name="Toxicon">
        <title>Molecular mechanism of pore formation by actinoporins.</title>
        <authorList>
            <person name="Kristan K.C."/>
            <person name="Viero G."/>
            <person name="Dalla Serra M."/>
            <person name="Macek P."/>
            <person name="Anderluh G."/>
        </authorList>
    </citation>
    <scope>REVIEW</scope>
</reference>
<reference key="3">
    <citation type="journal article" date="2012" name="Toxicon">
        <title>Development of a rational nomenclature for naming peptide and protein toxins from sea anemones.</title>
        <authorList>
            <person name="Oliveira J.S."/>
            <person name="Fuentes-Silva D."/>
            <person name="King G.F."/>
        </authorList>
    </citation>
    <scope>NOMENCLATURE</scope>
</reference>
<reference key="4">
    <citation type="journal article" date="2016" name="Angew. Chem. Int. Ed.">
        <title>Alpha-Helical Fragaceatoxin C Nanopore Engineered for Double-Stranded and Single-Stranded Nucleic Acid Analysis.</title>
        <authorList>
            <person name="Wloka C."/>
            <person name="Mutter N.L."/>
            <person name="Soskine M."/>
            <person name="Maglia G."/>
        </authorList>
    </citation>
    <scope>BIOTECHNOLOGY</scope>
</reference>
<reference key="5">
    <citation type="journal article" date="2019" name="Toxins">
        <title>The isolation of new pore-forming toxins from the sea anemone Actinia fragacea provides insights into the mechanisms of actinoporin evolution.</title>
        <authorList>
            <person name="Morante K."/>
            <person name="Bellomio A."/>
            <person name="Viguera A.R."/>
            <person name="Gonzalez-Manas J.M."/>
            <person name="Tsumoto K."/>
            <person name="Caaveiro J.M.M."/>
        </authorList>
    </citation>
    <scope>MASS SPECTROMETRY</scope>
    <scope>FUNCTION</scope>
    <scope>BIOPHYSICOCHEMICAL PROPERTIES</scope>
</reference>
<reference evidence="23" key="6">
    <citation type="journal article" date="2011" name="Structure">
        <title>Structural insights into the oligomerization and architecture of eukaryotic membrane pore-forming toxins.</title>
        <authorList>
            <person name="Mechaly A.E."/>
            <person name="Bellomio A."/>
            <person name="Gil-Carton D."/>
            <person name="Morante K."/>
            <person name="Valle M."/>
            <person name="Gonzalez-Manas J.M."/>
            <person name="Guerin D.M."/>
        </authorList>
    </citation>
    <scope>X-RAY CRYSTALLOGRAPHY (1.8 ANGSTROMS) OF 2-179</scope>
    <scope>SUBUNIT</scope>
</reference>
<reference evidence="26 27" key="7">
    <citation type="journal article" date="2012" name="J. Struct. Biol.">
        <title>Pores of the toxin FraC assemble into 2D hexagonal clusters in both crystal structures and model membranes.</title>
        <authorList>
            <person name="Mechaly A.E."/>
            <person name="Bellomio A."/>
            <person name="Morante K."/>
            <person name="Agirre J."/>
            <person name="Gil-Carton D."/>
            <person name="Valle M."/>
            <person name="Gonzalez-Manas J.M."/>
            <person name="Guerin D.M."/>
        </authorList>
    </citation>
    <scope>X-RAY CRYSTALLOGRAPHY (2.37 ANGSTROMS)</scope>
    <scope>SUBUNIT</scope>
</reference>
<reference evidence="34" key="8">
    <citation type="journal article" date="2015" name="J. Biol. Chem.">
        <title>A pore-forming toxin requires a specific residue for its activity in membranes with particular physicochemical properties.</title>
        <authorList>
            <person name="Morante K."/>
            <person name="Caaveiro J.M."/>
            <person name="Tanaka K."/>
            <person name="Gonzalez-Manas J.M."/>
            <person name="Tsumoto K."/>
        </authorList>
    </citation>
    <scope>X-RAY CRYSTALLOGRAPHY (1.29 ANGSTROMS) OF 3-179 OF MUTANT PRO-16</scope>
    <scope>MUTAGENESIS OF PHE-16</scope>
</reference>
<reference evidence="24 25 28 29 30 31 32 33" key="9">
    <citation type="journal article" date="2015" name="Nat. Commun.">
        <title>Structural basis for self-assembly of a cytolytic pore lined by protein and lipid.</title>
        <authorList>
            <person name="Tanaka K."/>
            <person name="Caaveiro J.M."/>
            <person name="Morante K."/>
            <person name="Gonzalez-Manas J.M."/>
            <person name="Tsumoto K."/>
        </authorList>
    </citation>
    <scope>X-RAY CRYSTALLOGRAPHY (1.57 ANGSTROMS) IN WATER-SOLUBLE STATE; IN MONOMERIC LIPID-BOUND FORM; IN PREPORE FORM AND IN FULLY ASSEMBLED TRANSMEMBRANE PORE</scope>
    <scope>MUTAGENESIS OF VAL-8; VAL-60; LYS-69; TRP-112; TRP-116 AND TRP-149</scope>
    <scope>RECOMBINANT EXPRESSION</scope>
</reference>
<reference evidence="35" key="10">
    <citation type="journal article" date="2017" name="Philos. Trans. R. Soc. Lond., B, Biol. Sci.">
        <title>Haemolytic actinoporins interact with carbohydrates using their lipid-binding module.</title>
        <authorList>
            <person name="Tanaka K."/>
            <person name="Caaveiro J.M.M."/>
            <person name="Morante K."/>
            <person name="Tsumoto K."/>
        </authorList>
    </citation>
    <scope>X-RAY CRYSTALLOGRAPHY (1.55 ANGSTROMS) OF 3-179 IN COMPLEX WITH CARBOHYDRATES VIA THE LIPID-BINDING MODULE</scope>
</reference>
<proteinExistence type="evidence at protein level"/>
<comment type="function">
    <text evidence="4 5 7 8">Pore-forming toxin (PFT) that consists of a crown-shaped octamer or nonamer that forms cation-selective hydrophilic pores of about 1.5 nm (inside) and 13 nm (outside) (PubMed:21300287, PubMed:25716479). It causes cardiac stimulation and cytolysis (EC(50)=1.6 nM on erythrocytes) (PubMed:19563820, PubMed:25759390, PubMed:31295915). Interestingly, the Phe-16 is crucial for hemolysis (PubMed:25759390). Pore formation is a multi-step process that involves specific recognition of membrane sphingomyelin (but neither cholesterol nor phosphatidylcholine) using aromatic rich region and adjacent phosphocholine (POC) binding site, firm binding to the membrane (mainly driven by hydrophobic interactions) accompanied by the transfer of the N-terminal region to the lipid-water interface and finally pore formation after oligomerization of monomers (PubMed:19563820, PubMed:25716479). It is probable that a dimeric form is an assembly intermediate before the complete oligomerization (PubMed:25716479). The formation of stable pores occurs only in vesicles composed of DOPC/SM (there is no oligomerization when the PFT is treated with vesicles of DOPC or SM alone) (PubMed:25716479). The transmembrane pore displays 8 lateral perforations, one at each subunit-subunit interface, partially occupied by the acyl-chain region of a bridging lipid (PubMed:25716479). Each pore contains 24 lipid molecules, firmly bound to each subunit, that is, 3 lipids (L1, L2, L3, L4 and/or L5) are associated to each subunit (PubMed:25716479). Lipid L1 bridges 2 subunits, whereas lipids L2 and L3 bind to sites at single subunit (PubMed:25716479).</text>
</comment>
<comment type="biophysicochemical properties">
    <temperatureDependence>
        <text evidence="11">Stable up to about 53 degrees Celsius.</text>
    </temperatureDependence>
</comment>
<comment type="subunit">
    <text evidence="5 6 7">Octamer or nonamer in membranes (PubMed:21300287, PubMed:22728830, PubMed:25716479). Monomer in the soluble state (PubMed:21300287, PubMed:22728830, PubMed:25716479).</text>
</comment>
<comment type="interaction">
    <interactant intactId="EBI-15910829">
        <id>B9W5G6</id>
    </interactant>
    <interactant intactId="EBI-15910829">
        <id>B9W5G6</id>
        <label>-</label>
    </interactant>
    <organismsDiffer>false</organismsDiffer>
    <experiments>2</experiments>
</comment>
<comment type="subcellular location">
    <subcellularLocation>
        <location evidence="4">Secreted</location>
    </subcellularLocation>
    <subcellularLocation>
        <location evidence="1">Nematocyst</location>
    </subcellularLocation>
    <subcellularLocation>
        <location evidence="4 5 7">Target cell membrane</location>
    </subcellularLocation>
    <text evidence="4 5 7">Forms an alpha-helical membrane channel in the prey.</text>
</comment>
<comment type="domain">
    <text evidence="2">Composed of a long N-terminal alpha-helix and a core region rich in beta-sheet structures. Before the pore formation, the alpha-helix binds the lipid membrane, partitions into the lipid-water interface and stabilizes the monomeric molecule on the membrane. Finally, it traverses the bilayer, thus forming the transmembrane pore.</text>
</comment>
<comment type="mass spectrometry" mass="19719.0" error="3.0" method="Electrospray" evidence="4"/>
<comment type="mass spectrometry" mass="19720.0" error="3.0" method="Electrospray" evidence="11"/>
<comment type="biotechnology">
    <text evidence="9">Has been engineered for DNA analysis in nanopore technology.</text>
</comment>
<comment type="miscellaneous">
    <text evidence="10">This protein has been found to bind carbohydrates, since it shows a substantial delay in elution profile in size-exclusion chromatography. The carbohydrate pocket ovelaps with the lipid-binding module of actinoporins.</text>
</comment>
<comment type="similarity">
    <text evidence="18">Belongs to the actinoporin family. Sea anemone subfamily.</text>
</comment>
<name>ACTPC_ACTFR</name>